<reference key="1">
    <citation type="journal article" date="1997" name="Microbiology">
        <title>Molecular and mutational analysis of a DNA region separating two methylotrophy gene clusters in Methylobacterium extorquens AM1.</title>
        <authorList>
            <person name="Chistoserdova L.V."/>
            <person name="Lidstrom M.E."/>
        </authorList>
    </citation>
    <scope>NUCLEOTIDE SEQUENCE [GENOMIC DNA]</scope>
</reference>
<reference key="2">
    <citation type="journal article" date="2009" name="PLoS ONE">
        <title>Methylobacterium genome sequences: a reference blueprint to investigate microbial metabolism of C1 compounds from natural and industrial sources.</title>
        <authorList>
            <person name="Vuilleumier S."/>
            <person name="Chistoserdova L."/>
            <person name="Lee M.-C."/>
            <person name="Bringel F."/>
            <person name="Lajus A."/>
            <person name="Zhou Y."/>
            <person name="Gourion B."/>
            <person name="Barbe V."/>
            <person name="Chang J."/>
            <person name="Cruveiller S."/>
            <person name="Dossat C."/>
            <person name="Gillett W."/>
            <person name="Gruffaz C."/>
            <person name="Haugen E."/>
            <person name="Hourcade E."/>
            <person name="Levy R."/>
            <person name="Mangenot S."/>
            <person name="Muller E."/>
            <person name="Nadalig T."/>
            <person name="Pagni M."/>
            <person name="Penny C."/>
            <person name="Peyraud R."/>
            <person name="Robinson D.G."/>
            <person name="Roche D."/>
            <person name="Rouy Z."/>
            <person name="Saenampechek C."/>
            <person name="Salvignol G."/>
            <person name="Vallenet D."/>
            <person name="Wu Z."/>
            <person name="Marx C.J."/>
            <person name="Vorholt J.A."/>
            <person name="Olson M.V."/>
            <person name="Kaul R."/>
            <person name="Weissenbach J."/>
            <person name="Medigue C."/>
            <person name="Lidstrom M.E."/>
        </authorList>
    </citation>
    <scope>NUCLEOTIDE SEQUENCE [LARGE SCALE GENOMIC DNA]</scope>
    <source>
        <strain>ATCC 14718 / DSM 1338 / JCM 2805 / NCIMB 9133 / AM1</strain>
    </source>
</reference>
<name>FOLB_METEA</name>
<evidence type="ECO:0000250" key="1">
    <source>
        <dbReference type="UniProtKB" id="P0AC16"/>
    </source>
</evidence>
<evidence type="ECO:0000305" key="2"/>
<organism>
    <name type="scientific">Methylorubrum extorquens (strain ATCC 14718 / DSM 1338 / JCM 2805 / NCIMB 9133 / AM1)</name>
    <name type="common">Methylobacterium extorquens</name>
    <dbReference type="NCBI Taxonomy" id="272630"/>
    <lineage>
        <taxon>Bacteria</taxon>
        <taxon>Pseudomonadati</taxon>
        <taxon>Pseudomonadota</taxon>
        <taxon>Alphaproteobacteria</taxon>
        <taxon>Hyphomicrobiales</taxon>
        <taxon>Methylobacteriaceae</taxon>
        <taxon>Methylorubrum</taxon>
    </lineage>
</organism>
<keyword id="KW-0289">Folate biosynthesis</keyword>
<keyword id="KW-0456">Lyase</keyword>
<keyword id="KW-1185">Reference proteome</keyword>
<accession>P71513</accession>
<accession>C5B124</accession>
<comment type="function">
    <text evidence="1">Catalyzes the conversion of 7,8-dihydroneopterin to 6-hydroxymethyl-7,8-dihydropterin.</text>
</comment>
<comment type="catalytic activity">
    <reaction evidence="1">
        <text>7,8-dihydroneopterin = 6-hydroxymethyl-7,8-dihydropterin + glycolaldehyde</text>
        <dbReference type="Rhea" id="RHEA:10540"/>
        <dbReference type="ChEBI" id="CHEBI:17001"/>
        <dbReference type="ChEBI" id="CHEBI:17071"/>
        <dbReference type="ChEBI" id="CHEBI:44841"/>
        <dbReference type="EC" id="4.1.2.25"/>
    </reaction>
</comment>
<comment type="pathway">
    <text>Cofactor biosynthesis; tetrahydrofolate biosynthesis; 2-amino-4-hydroxy-6-hydroxymethyl-7,8-dihydropteridine diphosphate from 7,8-dihydroneopterin triphosphate: step 3/4.</text>
</comment>
<comment type="similarity">
    <text evidence="2">Belongs to the DHNA family.</text>
</comment>
<gene>
    <name type="primary">folB</name>
    <name type="ordered locus">MexAM1_META1p1744</name>
</gene>
<sequence>MADRILVHRLAVFARHGVLPEEERLGQRFYISLECRLDLAPAGRSDDVAATVSYADLAEIALDIATNRRFALIEALAEAIAETCLARFPRIETIAVRIDKPSAPIPAVLDYAAIEIVRGRSDSVATTETR</sequence>
<protein>
    <recommendedName>
        <fullName>Dihydroneopterin aldolase</fullName>
        <shortName>DHNA</shortName>
        <ecNumber>4.1.2.25</ecNumber>
    </recommendedName>
    <alternativeName>
        <fullName>7,8-dihydroneopterin aldolase</fullName>
    </alternativeName>
</protein>
<proteinExistence type="inferred from homology"/>
<dbReference type="EC" id="4.1.2.25"/>
<dbReference type="EMBL" id="U72662">
    <property type="protein sequence ID" value="AAB58894.1"/>
    <property type="molecule type" value="Genomic_DNA"/>
</dbReference>
<dbReference type="EMBL" id="CP001510">
    <property type="protein sequence ID" value="ACS39588.1"/>
    <property type="molecule type" value="Genomic_DNA"/>
</dbReference>
<dbReference type="RefSeq" id="WP_003597613.1">
    <property type="nucleotide sequence ID" value="NC_012808.1"/>
</dbReference>
<dbReference type="SMR" id="P71513"/>
<dbReference type="STRING" id="272630.MexAM1_META1p1744"/>
<dbReference type="KEGG" id="mea:Mex_1p1744"/>
<dbReference type="eggNOG" id="COG1539">
    <property type="taxonomic scope" value="Bacteria"/>
</dbReference>
<dbReference type="HOGENOM" id="CLU_112632_1_3_5"/>
<dbReference type="OrthoDB" id="9808041at2"/>
<dbReference type="UniPathway" id="UPA00077">
    <property type="reaction ID" value="UER00154"/>
</dbReference>
<dbReference type="Proteomes" id="UP000009081">
    <property type="component" value="Chromosome"/>
</dbReference>
<dbReference type="GO" id="GO:0005737">
    <property type="term" value="C:cytoplasm"/>
    <property type="evidence" value="ECO:0007669"/>
    <property type="project" value="TreeGrafter"/>
</dbReference>
<dbReference type="GO" id="GO:0004150">
    <property type="term" value="F:dihydroneopterin aldolase activity"/>
    <property type="evidence" value="ECO:0007669"/>
    <property type="project" value="UniProtKB-EC"/>
</dbReference>
<dbReference type="GO" id="GO:0046656">
    <property type="term" value="P:folic acid biosynthetic process"/>
    <property type="evidence" value="ECO:0007669"/>
    <property type="project" value="UniProtKB-KW"/>
</dbReference>
<dbReference type="GO" id="GO:0046654">
    <property type="term" value="P:tetrahydrofolate biosynthetic process"/>
    <property type="evidence" value="ECO:0007669"/>
    <property type="project" value="UniProtKB-UniPathway"/>
</dbReference>
<dbReference type="CDD" id="cd00534">
    <property type="entry name" value="DHNA_DHNTPE"/>
    <property type="match status" value="1"/>
</dbReference>
<dbReference type="FunFam" id="3.30.1130.10:FF:000003">
    <property type="entry name" value="7,8-dihydroneopterin aldolase"/>
    <property type="match status" value="1"/>
</dbReference>
<dbReference type="Gene3D" id="3.30.1130.10">
    <property type="match status" value="1"/>
</dbReference>
<dbReference type="InterPro" id="IPR006156">
    <property type="entry name" value="Dihydroneopterin_aldolase"/>
</dbReference>
<dbReference type="InterPro" id="IPR006157">
    <property type="entry name" value="FolB_dom"/>
</dbReference>
<dbReference type="InterPro" id="IPR043133">
    <property type="entry name" value="GTP-CH-I_C/QueF"/>
</dbReference>
<dbReference type="NCBIfam" id="TIGR00525">
    <property type="entry name" value="folB"/>
    <property type="match status" value="1"/>
</dbReference>
<dbReference type="NCBIfam" id="TIGR00526">
    <property type="entry name" value="folB_dom"/>
    <property type="match status" value="1"/>
</dbReference>
<dbReference type="PANTHER" id="PTHR42844">
    <property type="entry name" value="DIHYDRONEOPTERIN ALDOLASE 1-RELATED"/>
    <property type="match status" value="1"/>
</dbReference>
<dbReference type="PANTHER" id="PTHR42844:SF1">
    <property type="entry name" value="DIHYDRONEOPTERIN ALDOLASE 1-RELATED"/>
    <property type="match status" value="1"/>
</dbReference>
<dbReference type="Pfam" id="PF02152">
    <property type="entry name" value="FolB"/>
    <property type="match status" value="1"/>
</dbReference>
<dbReference type="SMART" id="SM00905">
    <property type="entry name" value="FolB"/>
    <property type="match status" value="1"/>
</dbReference>
<dbReference type="SUPFAM" id="SSF55620">
    <property type="entry name" value="Tetrahydrobiopterin biosynthesis enzymes-like"/>
    <property type="match status" value="1"/>
</dbReference>
<feature type="chain" id="PRO_0000168273" description="Dihydroneopterin aldolase">
    <location>
        <begin position="1"/>
        <end position="130"/>
    </location>
</feature>
<feature type="active site" description="Proton donor/acceptor" evidence="1">
    <location>
        <position position="100"/>
    </location>
</feature>
<feature type="binding site" evidence="1">
    <location>
        <position position="22"/>
    </location>
    <ligand>
        <name>substrate</name>
    </ligand>
</feature>
<feature type="binding site" evidence="1">
    <location>
        <position position="54"/>
    </location>
    <ligand>
        <name>substrate</name>
    </ligand>
</feature>
<feature type="binding site" evidence="1">
    <location>
        <begin position="73"/>
        <end position="74"/>
    </location>
    <ligand>
        <name>substrate</name>
    </ligand>
</feature>
<feature type="sequence conflict" description="In Ref. 1; AAB58894." evidence="2" ref="1">
    <original>D</original>
    <variation>E</variation>
    <location>
        <position position="63"/>
    </location>
</feature>
<feature type="sequence conflict" description="In Ref. 1; AAB58894." evidence="2" ref="1">
    <original>T</original>
    <variation>S</variation>
    <location>
        <position position="66"/>
    </location>
</feature>